<dbReference type="EMBL" id="DQ517338">
    <property type="protein sequence ID" value="ABF71611.1"/>
    <property type="molecule type" value="Genomic_DNA"/>
</dbReference>
<dbReference type="RefSeq" id="YP_001285354.1">
    <property type="nucleotide sequence ID" value="NC_009526.1"/>
</dbReference>
<dbReference type="SMR" id="A4ZFA6"/>
<dbReference type="KEGG" id="vg:5246940"/>
<dbReference type="OrthoDB" id="9975at10239"/>
<dbReference type="Proteomes" id="UP000201164">
    <property type="component" value="Segment"/>
</dbReference>
<dbReference type="GO" id="GO:0003677">
    <property type="term" value="F:DNA binding"/>
    <property type="evidence" value="ECO:0007669"/>
    <property type="project" value="UniProtKB-KW"/>
</dbReference>
<dbReference type="GO" id="GO:0051276">
    <property type="term" value="P:chromosome organization"/>
    <property type="evidence" value="ECO:0007669"/>
    <property type="project" value="InterPro"/>
</dbReference>
<dbReference type="GO" id="GO:0052170">
    <property type="term" value="P:symbiont-mediated suppression of host innate immune response"/>
    <property type="evidence" value="ECO:0007669"/>
    <property type="project" value="UniProtKB-KW"/>
</dbReference>
<dbReference type="Gene3D" id="1.10.10.1400">
    <property type="entry name" value="Terminase, small subunit, N-terminal DNA-binding domain, HTH motif"/>
    <property type="match status" value="1"/>
</dbReference>
<dbReference type="InterPro" id="IPR052404">
    <property type="entry name" value="SPP1-like_terminase"/>
</dbReference>
<dbReference type="InterPro" id="IPR038713">
    <property type="entry name" value="Terminase_Gp1_N_sf"/>
</dbReference>
<dbReference type="InterPro" id="IPR005335">
    <property type="entry name" value="Terminase_ssu"/>
</dbReference>
<dbReference type="PANTHER" id="PTHR41328:SF2">
    <property type="entry name" value="TERMINASE SMALL SUBUNIT"/>
    <property type="match status" value="1"/>
</dbReference>
<dbReference type="PANTHER" id="PTHR41328">
    <property type="entry name" value="TERMINASE SMALL SUBUNIT-RELATED"/>
    <property type="match status" value="1"/>
</dbReference>
<dbReference type="Pfam" id="PF03592">
    <property type="entry name" value="Terminase_2"/>
    <property type="match status" value="1"/>
</dbReference>
<proteinExistence type="evidence at protein level"/>
<organism>
    <name type="scientific">Staphylococcus phage 80alpha</name>
    <dbReference type="NCBI Taxonomy" id="53369"/>
    <lineage>
        <taxon>Viruses</taxon>
        <taxon>Duplodnaviria</taxon>
        <taxon>Heunggongvirae</taxon>
        <taxon>Uroviricota</taxon>
        <taxon>Caudoviricetes</taxon>
        <taxon>Azeredovirinae</taxon>
        <taxon>Dubowvirus</taxon>
    </lineage>
</organism>
<evidence type="ECO:0000250" key="1">
    <source>
        <dbReference type="UniProtKB" id="P54307"/>
    </source>
</evidence>
<evidence type="ECO:0000269" key="2">
    <source>
    </source>
</evidence>
<evidence type="ECO:0000269" key="3">
    <source>
    </source>
</evidence>
<evidence type="ECO:0000303" key="4">
    <source>
    </source>
</evidence>
<evidence type="ECO:0000303" key="5">
    <source>
    </source>
</evidence>
<evidence type="ECO:0000305" key="6"/>
<evidence type="ECO:0000312" key="7">
    <source>
        <dbReference type="EMBL" id="ABF71611.1"/>
    </source>
</evidence>
<feature type="chain" id="PRO_0000459833" description="Terminase small subunit">
    <location>
        <begin position="1"/>
        <end position="146"/>
    </location>
</feature>
<feature type="mutagenesis site" description="Virus escapes the CBASS system in host bacteria, allowing virus propagation. Virus makes a much longer cabRNA that has altered secondary structure." evidence="3">
    <original>S</original>
    <variation>F</variation>
    <location>
        <position position="74"/>
    </location>
</feature>
<organismHost>
    <name type="scientific">Staphylococcus aureus</name>
    <dbReference type="NCBI Taxonomy" id="1280"/>
</organismHost>
<keyword id="KW-0238">DNA-binding</keyword>
<keyword id="KW-0945">Host-virus interaction</keyword>
<keyword id="KW-1090">Inhibition of host innate immune response by virus</keyword>
<keyword id="KW-1185">Reference proteome</keyword>
<keyword id="KW-0231">Viral genome packaging</keyword>
<keyword id="KW-0899">Viral immunoevasion</keyword>
<keyword id="KW-1188">Viral release from host cell</keyword>
<comment type="function">
    <text evidence="1">The terminase small subunit specifically recognizes the non-adjacent pacL and pacR packaging subsites and regulates the ATPase activity of the terminase large subunit. The terminase lies at a unique vertex of the procapsid and is composed of two subunits, a small terminase subunit involved in viral DNA recognition (packaging sequence), and a large terminase subunit possessing endonucleolytic and ATPase activities. Both terminase subunits heterooligomerize and are docked on the portal protein to form the packaging machine. The terminase large subunit exhibits endonuclease activity and cleaves the viral genome concatemer once the capsid is full (headful packaging). Once the capsid is packaged with the DNA, the terminase complex is substituted by neck proteins.</text>
</comment>
<comment type="subunit">
    <text evidence="1">Homodecamer. Interacts with the terminase large subunit; the active complex is probably composed of a one monomer of the large subunit and two or more decamers of the small subunit.</text>
</comment>
<comment type="disruption phenotype">
    <text evidence="2">Virus assembly is blocked at the procapsid stage; DNA is not packaged and tails are only rarely assembled on the propcapsid (PubMed:18565341).</text>
</comment>
<comment type="miscellaneous">
    <text evidence="3">Implicated in the production of cabRNA, an RNA that activates the host CBASS antivirus system. When the gene is mutated the virus becomes resistant to the host CBASS CdnE-Cap15 system. Alters production of virally-encoded cabRNA which usually starts on nucleotide 228 of this open reading frame (6 nt downstream of the Phe-74 mutation). A much longer viral RNA (escaper RNA) is detected in cells infected with the mutant virus that still binds to host CdnE, but the escaper RNA has a different secondary structure and while it binds CdnE, it does not activate the cyclic nucleotide synthase activity of CdnE (PubMed:37968393). Overexpression of wild-type TerS restores cyclic nucleotide production, partially restores host viral defense and mostly suppresses the escaper RNA suggesting this protein is required for correct production of cabRNA (PubMed:37968393).</text>
</comment>
<comment type="similarity">
    <text evidence="6">Belongs to the SPP1-like small terminase family.</text>
</comment>
<sequence>MNEKQKRFADEYIMNGCNGKKAAISAGYSKKTAESLASRLLRNVNVSEYIKERLEQIQEERLMSITEALALSASIARGEPQEAYSKKYDHLNDEVEKEVTYTITPTFEERQRSIDHILKVHGAYIDKKEITQKNIEINIGEYDDES</sequence>
<accession>A4ZFA6</accession>
<gene>
    <name evidence="4" type="primary">terS</name>
</gene>
<protein>
    <recommendedName>
        <fullName evidence="5">Terminase small subunit</fullName>
    </recommendedName>
</protein>
<name>TERS_BP80A</name>
<reference evidence="7" key="1">
    <citation type="journal article" date="2007" name="J. Bacteriol.">
        <title>Transducing particles of Staphylococcus aureus pathogenicity island SaPI1 are comprised of helper phage-encoded proteins.</title>
        <authorList>
            <person name="Tallent S.M."/>
            <person name="Langston T.B."/>
            <person name="Moran R.G."/>
            <person name="Christie G.E."/>
        </authorList>
    </citation>
    <scope>NUCLEOTIDE SEQUENCE [LARGE SCALE GENOMIC DNA]</scope>
</reference>
<reference evidence="7" key="2">
    <citation type="journal article" date="2010" name="Virology">
        <title>The complete genomes of Staphylococcus aureus bacteriophages 80 and 80alpha--implications for the specificity of SaPI mobilization.</title>
        <authorList>
            <person name="Christie G.E."/>
            <person name="Matthews A.M."/>
            <person name="King D.G."/>
            <person name="Lane K.D."/>
            <person name="Olivarez N.P."/>
            <person name="Tallent S.M."/>
            <person name="Gill S.R."/>
            <person name="Novick R.P."/>
        </authorList>
    </citation>
    <scope>NUCLEOTIDE SEQUENCE [LARGE SCALE GENOMIC DNA]</scope>
</reference>
<reference key="3">
    <citation type="journal article" date="2008" name="J. Mol. Biol.">
        <title>Capsid size determination by Staphylococcus aureus pathogenicity island SaPI1 involves specific incorporation of SaPI1 proteins into procapsids.</title>
        <authorList>
            <person name="Poliakov A."/>
            <person name="Chang J.R."/>
            <person name="Spilman M.S."/>
            <person name="Damle P.K."/>
            <person name="Christie G.E."/>
            <person name="Mobley J.A."/>
            <person name="Dokland T."/>
        </authorList>
    </citation>
    <scope>DISRUPTION PHENOTYPE</scope>
</reference>
<reference key="4">
    <citation type="journal article" date="2023" name="Nature">
        <title>Bacterial cGAS senses a viral RNA to initiate immunity.</title>
        <authorList>
            <person name="Banh D.V."/>
            <person name="Roberts C.G."/>
            <person name="Morales-Amador A."/>
            <person name="Berryhill B.A."/>
            <person name="Chaudhry W."/>
            <person name="Levin B.R."/>
            <person name="Brady S.F."/>
            <person name="Marraffini L.A."/>
        </authorList>
    </citation>
    <scope>CBASS RESISTANCE</scope>
    <scope>MUTAGENESIS OF SER-74</scope>
</reference>